<proteinExistence type="inferred from homology"/>
<accession>Q1C4P6</accession>
<evidence type="ECO:0000255" key="1">
    <source>
        <dbReference type="HAMAP-Rule" id="MF_00017"/>
    </source>
</evidence>
<comment type="function">
    <text evidence="1">May play a role in DNA repair. It seems to be involved in an RecBC-independent recombinational process of DNA repair. It may act with RecF and RecO.</text>
</comment>
<comment type="similarity">
    <text evidence="1">Belongs to the RecR family.</text>
</comment>
<protein>
    <recommendedName>
        <fullName evidence="1">Recombination protein RecR</fullName>
    </recommendedName>
</protein>
<keyword id="KW-0227">DNA damage</keyword>
<keyword id="KW-0233">DNA recombination</keyword>
<keyword id="KW-0234">DNA repair</keyword>
<keyword id="KW-0479">Metal-binding</keyword>
<keyword id="KW-0862">Zinc</keyword>
<keyword id="KW-0863">Zinc-finger</keyword>
<dbReference type="EMBL" id="CP000308">
    <property type="protein sequence ID" value="ABG14576.1"/>
    <property type="molecule type" value="Genomic_DNA"/>
</dbReference>
<dbReference type="RefSeq" id="WP_002208603.1">
    <property type="nucleotide sequence ID" value="NZ_CP009906.1"/>
</dbReference>
<dbReference type="SMR" id="Q1C4P6"/>
<dbReference type="GeneID" id="57975591"/>
<dbReference type="KEGG" id="ypa:YPA_2614"/>
<dbReference type="Proteomes" id="UP000001971">
    <property type="component" value="Chromosome"/>
</dbReference>
<dbReference type="GO" id="GO:0003677">
    <property type="term" value="F:DNA binding"/>
    <property type="evidence" value="ECO:0007669"/>
    <property type="project" value="UniProtKB-UniRule"/>
</dbReference>
<dbReference type="GO" id="GO:0008270">
    <property type="term" value="F:zinc ion binding"/>
    <property type="evidence" value="ECO:0007669"/>
    <property type="project" value="UniProtKB-KW"/>
</dbReference>
<dbReference type="GO" id="GO:0006310">
    <property type="term" value="P:DNA recombination"/>
    <property type="evidence" value="ECO:0007669"/>
    <property type="project" value="UniProtKB-UniRule"/>
</dbReference>
<dbReference type="GO" id="GO:0006281">
    <property type="term" value="P:DNA repair"/>
    <property type="evidence" value="ECO:0007669"/>
    <property type="project" value="UniProtKB-UniRule"/>
</dbReference>
<dbReference type="CDD" id="cd01025">
    <property type="entry name" value="TOPRIM_recR"/>
    <property type="match status" value="1"/>
</dbReference>
<dbReference type="FunFam" id="1.10.8.420:FF:000001">
    <property type="entry name" value="Recombination protein RecR"/>
    <property type="match status" value="1"/>
</dbReference>
<dbReference type="FunFam" id="3.40.1360.10:FF:000001">
    <property type="entry name" value="Recombination protein RecR"/>
    <property type="match status" value="1"/>
</dbReference>
<dbReference type="Gene3D" id="3.40.1360.10">
    <property type="match status" value="1"/>
</dbReference>
<dbReference type="Gene3D" id="6.10.250.240">
    <property type="match status" value="1"/>
</dbReference>
<dbReference type="Gene3D" id="1.10.8.420">
    <property type="entry name" value="RecR Domain 1"/>
    <property type="match status" value="1"/>
</dbReference>
<dbReference type="HAMAP" id="MF_00017">
    <property type="entry name" value="RecR"/>
    <property type="match status" value="1"/>
</dbReference>
<dbReference type="InterPro" id="IPR000093">
    <property type="entry name" value="DNA_Rcmb_RecR"/>
</dbReference>
<dbReference type="InterPro" id="IPR023627">
    <property type="entry name" value="Rcmb_RecR"/>
</dbReference>
<dbReference type="InterPro" id="IPR015967">
    <property type="entry name" value="Rcmb_RecR_Znf"/>
</dbReference>
<dbReference type="InterPro" id="IPR006171">
    <property type="entry name" value="TOPRIM_dom"/>
</dbReference>
<dbReference type="InterPro" id="IPR034137">
    <property type="entry name" value="TOPRIM_RecR"/>
</dbReference>
<dbReference type="NCBIfam" id="TIGR00615">
    <property type="entry name" value="recR"/>
    <property type="match status" value="1"/>
</dbReference>
<dbReference type="PANTHER" id="PTHR30446">
    <property type="entry name" value="RECOMBINATION PROTEIN RECR"/>
    <property type="match status" value="1"/>
</dbReference>
<dbReference type="PANTHER" id="PTHR30446:SF0">
    <property type="entry name" value="RECOMBINATION PROTEIN RECR"/>
    <property type="match status" value="1"/>
</dbReference>
<dbReference type="Pfam" id="PF21175">
    <property type="entry name" value="RecR_C"/>
    <property type="match status" value="1"/>
</dbReference>
<dbReference type="Pfam" id="PF21176">
    <property type="entry name" value="RecR_HhH"/>
    <property type="match status" value="1"/>
</dbReference>
<dbReference type="Pfam" id="PF02132">
    <property type="entry name" value="RecR_ZnF"/>
    <property type="match status" value="1"/>
</dbReference>
<dbReference type="Pfam" id="PF13662">
    <property type="entry name" value="Toprim_4"/>
    <property type="match status" value="1"/>
</dbReference>
<dbReference type="SMART" id="SM00493">
    <property type="entry name" value="TOPRIM"/>
    <property type="match status" value="1"/>
</dbReference>
<dbReference type="SUPFAM" id="SSF111304">
    <property type="entry name" value="Recombination protein RecR"/>
    <property type="match status" value="1"/>
</dbReference>
<dbReference type="PROSITE" id="PS01300">
    <property type="entry name" value="RECR"/>
    <property type="match status" value="1"/>
</dbReference>
<dbReference type="PROSITE" id="PS50880">
    <property type="entry name" value="TOPRIM"/>
    <property type="match status" value="1"/>
</dbReference>
<organism>
    <name type="scientific">Yersinia pestis bv. Antiqua (strain Antiqua)</name>
    <dbReference type="NCBI Taxonomy" id="360102"/>
    <lineage>
        <taxon>Bacteria</taxon>
        <taxon>Pseudomonadati</taxon>
        <taxon>Pseudomonadota</taxon>
        <taxon>Gammaproteobacteria</taxon>
        <taxon>Enterobacterales</taxon>
        <taxon>Yersiniaceae</taxon>
        <taxon>Yersinia</taxon>
    </lineage>
</organism>
<reference key="1">
    <citation type="journal article" date="2006" name="J. Bacteriol.">
        <title>Complete genome sequence of Yersinia pestis strains Antiqua and Nepal516: evidence of gene reduction in an emerging pathogen.</title>
        <authorList>
            <person name="Chain P.S.G."/>
            <person name="Hu P."/>
            <person name="Malfatti S.A."/>
            <person name="Radnedge L."/>
            <person name="Larimer F."/>
            <person name="Vergez L.M."/>
            <person name="Worsham P."/>
            <person name="Chu M.C."/>
            <person name="Andersen G.L."/>
        </authorList>
    </citation>
    <scope>NUCLEOTIDE SEQUENCE [LARGE SCALE GENOMIC DNA]</scope>
    <source>
        <strain>Antiqua</strain>
    </source>
</reference>
<sequence length="201" mass="21654">MQTSPLLESLMEALRCLPGVGPKSAQRMAFQLLQRDRSGGMRLAQALTRAMSEIGHCADCRTFTEQEHCTICLNPRRQQNGQICVVESPADIHAIEQTGQFGGRYFVLMGHLSPMDGIGPGDIGLDLLEKRLSTEAISEVILATNPTVEGDATANYIGQMCGQYGILASRIAHGVPVGGELEMVDGTTLSHSLAGRNPIKY</sequence>
<name>RECR_YERPA</name>
<gene>
    <name evidence="1" type="primary">recR</name>
    <name type="ordered locus">YPA_2614</name>
</gene>
<feature type="chain" id="PRO_1000001637" description="Recombination protein RecR">
    <location>
        <begin position="1"/>
        <end position="201"/>
    </location>
</feature>
<feature type="domain" description="Toprim" evidence="1">
    <location>
        <begin position="81"/>
        <end position="176"/>
    </location>
</feature>
<feature type="zinc finger region" description="C4-type" evidence="1">
    <location>
        <begin position="57"/>
        <end position="72"/>
    </location>
</feature>